<organism>
    <name type="scientific">Methanopyrus kandleri (strain AV19 / DSM 6324 / JCM 9639 / NBRC 100938)</name>
    <dbReference type="NCBI Taxonomy" id="190192"/>
    <lineage>
        <taxon>Archaea</taxon>
        <taxon>Methanobacteriati</taxon>
        <taxon>Methanobacteriota</taxon>
        <taxon>Methanomada group</taxon>
        <taxon>Methanopyri</taxon>
        <taxon>Methanopyrales</taxon>
        <taxon>Methanopyraceae</taxon>
        <taxon>Methanopyrus</taxon>
    </lineage>
</organism>
<sequence length="127" mass="14322">MTWAPTGPTNVELRKLIRDLKKAACEYNAPVWRDVAERLSRPRRQRAEVNVGKLDGLARRGVIQEEETVLVPGKVLGDGVITQPLRVAAWRFSRTARMKIEAAGGECLTIRELLEENPEGSYIRIIE</sequence>
<evidence type="ECO:0000255" key="1">
    <source>
        <dbReference type="HAMAP-Rule" id="MF_00329"/>
    </source>
</evidence>
<evidence type="ECO:0000305" key="2"/>
<gene>
    <name evidence="1" type="primary">rpl18e</name>
    <name type="synonym">rpl18A</name>
    <name type="ordered locus">MK1475</name>
</gene>
<keyword id="KW-1185">Reference proteome</keyword>
<keyword id="KW-0687">Ribonucleoprotein</keyword>
<keyword id="KW-0689">Ribosomal protein</keyword>
<name>RL18E_METKA</name>
<protein>
    <recommendedName>
        <fullName evidence="1">Large ribosomal subunit protein eL18</fullName>
    </recommendedName>
    <alternativeName>
        <fullName evidence="2">50S ribosomal protein L18e</fullName>
    </alternativeName>
</protein>
<comment type="similarity">
    <text evidence="1">Belongs to the eukaryotic ribosomal protein eL18 family.</text>
</comment>
<proteinExistence type="inferred from homology"/>
<dbReference type="EMBL" id="AE009439">
    <property type="protein sequence ID" value="AAM02688.1"/>
    <property type="molecule type" value="Genomic_DNA"/>
</dbReference>
<dbReference type="RefSeq" id="WP_011019843.1">
    <property type="nucleotide sequence ID" value="NC_003551.1"/>
</dbReference>
<dbReference type="SMR" id="Q8TVB7"/>
<dbReference type="FunCoup" id="Q8TVB7">
    <property type="interactions" value="136"/>
</dbReference>
<dbReference type="STRING" id="190192.MK1475"/>
<dbReference type="PaxDb" id="190192-MK1475"/>
<dbReference type="EnsemblBacteria" id="AAM02688">
    <property type="protein sequence ID" value="AAM02688"/>
    <property type="gene ID" value="MK1475"/>
</dbReference>
<dbReference type="GeneID" id="1478070"/>
<dbReference type="KEGG" id="mka:MK1475"/>
<dbReference type="PATRIC" id="fig|190192.8.peg.1631"/>
<dbReference type="HOGENOM" id="CLU_146465_0_0_2"/>
<dbReference type="InParanoid" id="Q8TVB7"/>
<dbReference type="OrthoDB" id="11309at2157"/>
<dbReference type="Proteomes" id="UP000001826">
    <property type="component" value="Chromosome"/>
</dbReference>
<dbReference type="GO" id="GO:0022625">
    <property type="term" value="C:cytosolic large ribosomal subunit"/>
    <property type="evidence" value="ECO:0007669"/>
    <property type="project" value="TreeGrafter"/>
</dbReference>
<dbReference type="GO" id="GO:0003723">
    <property type="term" value="F:RNA binding"/>
    <property type="evidence" value="ECO:0007669"/>
    <property type="project" value="TreeGrafter"/>
</dbReference>
<dbReference type="GO" id="GO:0003735">
    <property type="term" value="F:structural constituent of ribosome"/>
    <property type="evidence" value="ECO:0007669"/>
    <property type="project" value="InterPro"/>
</dbReference>
<dbReference type="GO" id="GO:0006412">
    <property type="term" value="P:translation"/>
    <property type="evidence" value="ECO:0007669"/>
    <property type="project" value="UniProtKB-UniRule"/>
</dbReference>
<dbReference type="Gene3D" id="3.100.10.10">
    <property type="match status" value="1"/>
</dbReference>
<dbReference type="HAMAP" id="MF_00329">
    <property type="entry name" value="Ribosomal_eL18"/>
    <property type="match status" value="1"/>
</dbReference>
<dbReference type="InterPro" id="IPR000039">
    <property type="entry name" value="Ribosomal_eL18"/>
</dbReference>
<dbReference type="InterPro" id="IPR021132">
    <property type="entry name" value="Ribosomal_eL18/eL18-A/B/_CS"/>
</dbReference>
<dbReference type="InterPro" id="IPR022947">
    <property type="entry name" value="Ribosomal_eL18_arc"/>
</dbReference>
<dbReference type="InterPro" id="IPR021131">
    <property type="entry name" value="Ribosomal_uL15/eL18"/>
</dbReference>
<dbReference type="InterPro" id="IPR036227">
    <property type="entry name" value="Ribosomal_uL15/eL18_sf"/>
</dbReference>
<dbReference type="InterPro" id="IPR001196">
    <property type="entry name" value="Ribosomal_uL15_CS"/>
</dbReference>
<dbReference type="NCBIfam" id="NF003079">
    <property type="entry name" value="PRK04005.1"/>
    <property type="match status" value="1"/>
</dbReference>
<dbReference type="PANTHER" id="PTHR10934">
    <property type="entry name" value="60S RIBOSOMAL PROTEIN L18"/>
    <property type="match status" value="1"/>
</dbReference>
<dbReference type="PANTHER" id="PTHR10934:SF2">
    <property type="entry name" value="LARGE RIBOSOMAL SUBUNIT PROTEIN EL18"/>
    <property type="match status" value="1"/>
</dbReference>
<dbReference type="Pfam" id="PF17135">
    <property type="entry name" value="Ribosomal_L18"/>
    <property type="match status" value="1"/>
</dbReference>
<dbReference type="SUPFAM" id="SSF52080">
    <property type="entry name" value="Ribosomal proteins L15p and L18e"/>
    <property type="match status" value="1"/>
</dbReference>
<dbReference type="PROSITE" id="PS01106">
    <property type="entry name" value="RIBOSOMAL_L18E"/>
    <property type="match status" value="1"/>
</dbReference>
<accession>Q8TVB7</accession>
<reference key="1">
    <citation type="journal article" date="2002" name="Proc. Natl. Acad. Sci. U.S.A.">
        <title>The complete genome of hyperthermophile Methanopyrus kandleri AV19 and monophyly of archaeal methanogens.</title>
        <authorList>
            <person name="Slesarev A.I."/>
            <person name="Mezhevaya K.V."/>
            <person name="Makarova K.S."/>
            <person name="Polushin N.N."/>
            <person name="Shcherbinina O.V."/>
            <person name="Shakhova V.V."/>
            <person name="Belova G.I."/>
            <person name="Aravind L."/>
            <person name="Natale D.A."/>
            <person name="Rogozin I.B."/>
            <person name="Tatusov R.L."/>
            <person name="Wolf Y.I."/>
            <person name="Stetter K.O."/>
            <person name="Malykh A.G."/>
            <person name="Koonin E.V."/>
            <person name="Kozyavkin S.A."/>
        </authorList>
    </citation>
    <scope>NUCLEOTIDE SEQUENCE [LARGE SCALE GENOMIC DNA]</scope>
    <source>
        <strain>AV19 / DSM 6324 / JCM 9639 / NBRC 100938</strain>
    </source>
</reference>
<feature type="chain" id="PRO_0000132791" description="Large ribosomal subunit protein eL18">
    <location>
        <begin position="1"/>
        <end position="127"/>
    </location>
</feature>